<protein>
    <recommendedName>
        <fullName>Heparanase</fullName>
        <ecNumber>3.2.1.166</ecNumber>
    </recommendedName>
    <alternativeName>
        <fullName>Endo-glucoronidase</fullName>
    </alternativeName>
    <component>
        <recommendedName>
            <fullName>Heparanase 8 kDa subunit</fullName>
        </recommendedName>
    </component>
    <component>
        <recommendedName>
            <fullName>Heparanase 50 kDa subunit</fullName>
        </recommendedName>
    </component>
</protein>
<sequence>MLRPLLLLWLWGRLGALTQGTPAGTAPTKDVVDLEFYTKRLFQSVSPSFLSITIDASLATDPRFLTFLGSPRLRALARGLSPAYLRFGGTKTDFLIFDPNKEPTSEERSYWQSQDNNDICGSERVSADVLRKLQMEWPFQELLLLREQYQREFKNSTYSRSSVDMLYSFAKCSRLDLIFGLNALLRTPDLRWNSSNAQLLLNYCSSKGYNISWELGNEPNSFWKKAHISIDGLQLGEDFVELHKLLQKSAFQNAKLYGPDIGQPRGKTVKLLRSFLKAGGEVIDSLTWHHYYLNGRVATKEDFLSSDVLDTFILSVQKILKVTKEMTPGKKVWLGETSSAYGGGAPLLSDTFAAGFMWLDKLGLSAQLGIEVVMRQVFFGAGNYHLVDENFEPLPDYWLSLLFKKLVGPKVLMSRVKGPDRSKLRVYLHCTNVYHPRYREGDLTLYVLNLHNVTKHLKLPPPMFSRPVDKYLLKPFGSDGLLSKSVQLNGQTLKMVDEQTLPALTEKPLPAGSSLSVPAFSYGFFVIRNAKIAACI</sequence>
<dbReference type="EC" id="3.2.1.166"/>
<dbReference type="EMBL" id="AF359508">
    <property type="protein sequence ID" value="AAQ15189.1"/>
    <property type="molecule type" value="mRNA"/>
</dbReference>
<dbReference type="EMBL" id="AF184967">
    <property type="protein sequence ID" value="AAF04563.1"/>
    <property type="molecule type" value="mRNA"/>
</dbReference>
<dbReference type="RefSeq" id="NP_072127.1">
    <property type="nucleotide sequence ID" value="NM_022605.1"/>
</dbReference>
<dbReference type="SMR" id="Q71RP1"/>
<dbReference type="FunCoup" id="Q71RP1">
    <property type="interactions" value="93"/>
</dbReference>
<dbReference type="STRING" id="10116.ENSRNOP00000002983"/>
<dbReference type="CAZy" id="GH79">
    <property type="family name" value="Glycoside Hydrolase Family 79"/>
</dbReference>
<dbReference type="GlyCosmos" id="Q71RP1">
    <property type="glycosylation" value="4 sites, No reported glycans"/>
</dbReference>
<dbReference type="GlyGen" id="Q71RP1">
    <property type="glycosylation" value="4 sites"/>
</dbReference>
<dbReference type="PhosphoSitePlus" id="Q71RP1"/>
<dbReference type="PaxDb" id="10116-ENSRNOP00000002983"/>
<dbReference type="GeneID" id="64537"/>
<dbReference type="KEGG" id="rno:64537"/>
<dbReference type="AGR" id="RGD:61969"/>
<dbReference type="CTD" id="10855"/>
<dbReference type="RGD" id="61969">
    <property type="gene designation" value="Hpse"/>
</dbReference>
<dbReference type="eggNOG" id="ENOG502QQST">
    <property type="taxonomic scope" value="Eukaryota"/>
</dbReference>
<dbReference type="InParanoid" id="Q71RP1"/>
<dbReference type="OrthoDB" id="35981at9989"/>
<dbReference type="PhylomeDB" id="Q71RP1"/>
<dbReference type="Reactome" id="R-RNO-2024096">
    <property type="pathway name" value="HS-GAG degradation"/>
</dbReference>
<dbReference type="Reactome" id="R-RNO-6798695">
    <property type="pathway name" value="Neutrophil degranulation"/>
</dbReference>
<dbReference type="PRO" id="PR:Q71RP1"/>
<dbReference type="Proteomes" id="UP000002494">
    <property type="component" value="Unplaced"/>
</dbReference>
<dbReference type="GO" id="GO:0031012">
    <property type="term" value="C:extracellular matrix"/>
    <property type="evidence" value="ECO:0000318"/>
    <property type="project" value="GO_Central"/>
</dbReference>
<dbReference type="GO" id="GO:0005615">
    <property type="term" value="C:extracellular space"/>
    <property type="evidence" value="ECO:0000266"/>
    <property type="project" value="RGD"/>
</dbReference>
<dbReference type="GO" id="GO:1904974">
    <property type="term" value="C:heparanase complex"/>
    <property type="evidence" value="ECO:0000266"/>
    <property type="project" value="RGD"/>
</dbReference>
<dbReference type="GO" id="GO:0005765">
    <property type="term" value="C:lysosomal membrane"/>
    <property type="evidence" value="ECO:0007669"/>
    <property type="project" value="UniProtKB-SubCell"/>
</dbReference>
<dbReference type="GO" id="GO:0005764">
    <property type="term" value="C:lysosome"/>
    <property type="evidence" value="ECO:0000266"/>
    <property type="project" value="RGD"/>
</dbReference>
<dbReference type="GO" id="GO:0045121">
    <property type="term" value="C:membrane raft"/>
    <property type="evidence" value="ECO:0000266"/>
    <property type="project" value="RGD"/>
</dbReference>
<dbReference type="GO" id="GO:0005634">
    <property type="term" value="C:nucleus"/>
    <property type="evidence" value="ECO:0000266"/>
    <property type="project" value="RGD"/>
</dbReference>
<dbReference type="GO" id="GO:0030305">
    <property type="term" value="F:heparanase activity"/>
    <property type="evidence" value="ECO:0000314"/>
    <property type="project" value="RGD"/>
</dbReference>
<dbReference type="GO" id="GO:0045545">
    <property type="term" value="F:syndecan binding"/>
    <property type="evidence" value="ECO:0000266"/>
    <property type="project" value="RGD"/>
</dbReference>
<dbReference type="GO" id="GO:0060055">
    <property type="term" value="P:angiogenesis involved in wound healing"/>
    <property type="evidence" value="ECO:0000266"/>
    <property type="project" value="RGD"/>
</dbReference>
<dbReference type="GO" id="GO:0007160">
    <property type="term" value="P:cell-matrix adhesion"/>
    <property type="evidence" value="ECO:0000266"/>
    <property type="project" value="RGD"/>
</dbReference>
<dbReference type="GO" id="GO:0061028">
    <property type="term" value="P:establishment of endothelial barrier"/>
    <property type="evidence" value="ECO:0000266"/>
    <property type="project" value="RGD"/>
</dbReference>
<dbReference type="GO" id="GO:0030200">
    <property type="term" value="P:heparan sulfate proteoglycan catabolic process"/>
    <property type="evidence" value="ECO:0000250"/>
    <property type="project" value="UniProtKB"/>
</dbReference>
<dbReference type="GO" id="GO:0030202">
    <property type="term" value="P:heparin proteoglycan metabolic process"/>
    <property type="evidence" value="ECO:0000266"/>
    <property type="project" value="RGD"/>
</dbReference>
<dbReference type="GO" id="GO:0030194">
    <property type="term" value="P:positive regulation of blood coagulation"/>
    <property type="evidence" value="ECO:0000266"/>
    <property type="project" value="RGD"/>
</dbReference>
<dbReference type="GO" id="GO:0051798">
    <property type="term" value="P:positive regulation of hair follicle development"/>
    <property type="evidence" value="ECO:0000266"/>
    <property type="project" value="RGD"/>
</dbReference>
<dbReference type="GO" id="GO:0033690">
    <property type="term" value="P:positive regulation of osteoblast proliferation"/>
    <property type="evidence" value="ECO:0000266"/>
    <property type="project" value="RGD"/>
</dbReference>
<dbReference type="GO" id="GO:0051897">
    <property type="term" value="P:positive regulation of phosphatidylinositol 3-kinase/protein kinase B signal transduction"/>
    <property type="evidence" value="ECO:0000266"/>
    <property type="project" value="RGD"/>
</dbReference>
<dbReference type="GO" id="GO:0010575">
    <property type="term" value="P:positive regulation of vascular endothelial growth factor production"/>
    <property type="evidence" value="ECO:0000266"/>
    <property type="project" value="RGD"/>
</dbReference>
<dbReference type="GO" id="GO:0071806">
    <property type="term" value="P:protein transmembrane transport"/>
    <property type="evidence" value="ECO:0000266"/>
    <property type="project" value="RGD"/>
</dbReference>
<dbReference type="GO" id="GO:0051797">
    <property type="term" value="P:regulation of hair follicle development"/>
    <property type="evidence" value="ECO:0000266"/>
    <property type="project" value="RGD"/>
</dbReference>
<dbReference type="GO" id="GO:0046677">
    <property type="term" value="P:response to antibiotic"/>
    <property type="evidence" value="ECO:0000266"/>
    <property type="project" value="RGD"/>
</dbReference>
<dbReference type="GO" id="GO:0061042">
    <property type="term" value="P:vascular wound healing"/>
    <property type="evidence" value="ECO:0000266"/>
    <property type="project" value="RGD"/>
</dbReference>
<dbReference type="GO" id="GO:0042060">
    <property type="term" value="P:wound healing"/>
    <property type="evidence" value="ECO:0000266"/>
    <property type="project" value="RGD"/>
</dbReference>
<dbReference type="Gene3D" id="3.20.20.80">
    <property type="entry name" value="Glycosidases"/>
    <property type="match status" value="1"/>
</dbReference>
<dbReference type="InterPro" id="IPR005199">
    <property type="entry name" value="Glyco_hydro_79"/>
</dbReference>
<dbReference type="InterPro" id="IPR017853">
    <property type="entry name" value="Glycoside_hydrolase_SF"/>
</dbReference>
<dbReference type="PANTHER" id="PTHR46145">
    <property type="entry name" value="HEPARANASE"/>
    <property type="match status" value="1"/>
</dbReference>
<dbReference type="PANTHER" id="PTHR46145:SF3">
    <property type="entry name" value="HEPARANASE"/>
    <property type="match status" value="1"/>
</dbReference>
<dbReference type="Pfam" id="PF03662">
    <property type="entry name" value="Glyco_hydro_79n"/>
    <property type="match status" value="1"/>
</dbReference>
<dbReference type="SUPFAM" id="SSF51445">
    <property type="entry name" value="(Trans)glycosidases"/>
    <property type="match status" value="1"/>
</dbReference>
<proteinExistence type="evidence at transcript level"/>
<name>HPSE_RAT</name>
<feature type="signal peptide" evidence="1">
    <location>
        <begin position="1"/>
        <end position="28"/>
    </location>
</feature>
<feature type="chain" id="PRO_0000042266" description="Heparanase 8 kDa subunit">
    <location>
        <begin position="29"/>
        <end position="102"/>
    </location>
</feature>
<feature type="propeptide" id="PRO_0000042267" description="Linker peptide" evidence="1">
    <location>
        <begin position="103"/>
        <end position="150"/>
    </location>
</feature>
<feature type="chain" id="PRO_0000042268" description="Heparanase 50 kDa subunit">
    <location>
        <begin position="151"/>
        <end position="536"/>
    </location>
</feature>
<feature type="region of interest" description="Required for heterodimerization with the heparanase 8 kDa subunit" evidence="2">
    <location>
        <begin position="281"/>
        <end position="410"/>
    </location>
</feature>
<feature type="region of interest" description="Required for transferring proheparanase to the Golgi apparatus, secretion and subsequent enzyme activity and for enhancement of PKB/AKT1 phosphorylation" evidence="2">
    <location>
        <begin position="520"/>
        <end position="536"/>
    </location>
</feature>
<feature type="active site" description="Proton donor" evidence="2">
    <location>
        <position position="218"/>
    </location>
</feature>
<feature type="active site" description="Nucleophile" evidence="2">
    <location>
        <position position="336"/>
    </location>
</feature>
<feature type="binding site" evidence="2">
    <location>
        <begin position="55"/>
        <end position="57"/>
    </location>
    <ligand>
        <name>heparan sulfate group</name>
        <dbReference type="ChEBI" id="CHEBI:157750"/>
    </ligand>
</feature>
<feature type="binding site" evidence="2">
    <location>
        <position position="90"/>
    </location>
    <ligand>
        <name>heparan sulfate group</name>
        <dbReference type="ChEBI" id="CHEBI:157750"/>
    </ligand>
</feature>
<feature type="binding site" evidence="2">
    <location>
        <begin position="151"/>
        <end position="155"/>
    </location>
    <ligand>
        <name>heparan sulfate group</name>
        <dbReference type="ChEBI" id="CHEBI:157750"/>
    </ligand>
</feature>
<feature type="binding site" evidence="2">
    <location>
        <begin position="263"/>
        <end position="273"/>
    </location>
    <ligand>
        <name>heparan sulfate group</name>
        <dbReference type="ChEBI" id="CHEBI:157750"/>
    </ligand>
</feature>
<feature type="binding site" evidence="2">
    <location>
        <position position="289"/>
    </location>
    <ligand>
        <name>heparan sulfate group</name>
        <dbReference type="ChEBI" id="CHEBI:157750"/>
    </ligand>
</feature>
<feature type="binding site" evidence="2">
    <location>
        <position position="296"/>
    </location>
    <ligand>
        <name>heparan sulfate group</name>
        <dbReference type="ChEBI" id="CHEBI:157750"/>
    </ligand>
</feature>
<feature type="binding site" evidence="2">
    <location>
        <begin position="341"/>
        <end position="343"/>
    </location>
    <ligand>
        <name>heparan sulfate group</name>
        <dbReference type="ChEBI" id="CHEBI:157750"/>
    </ligand>
</feature>
<feature type="binding site" evidence="2">
    <location>
        <begin position="382"/>
        <end position="384"/>
    </location>
    <ligand>
        <name>heparan sulfate group</name>
        <dbReference type="ChEBI" id="CHEBI:157750"/>
    </ligand>
</feature>
<feature type="glycosylation site" description="N-linked (GlcNAc...) asparagine" evidence="2">
    <location>
        <position position="155"/>
    </location>
</feature>
<feature type="glycosylation site" description="N-linked (GlcNAc...) asparagine" evidence="2">
    <location>
        <position position="193"/>
    </location>
</feature>
<feature type="glycosylation site" description="N-linked (GlcNAc...) asparagine" evidence="2">
    <location>
        <position position="210"/>
    </location>
</feature>
<feature type="glycosylation site" description="N-linked (GlcNAc...) asparagine" evidence="2">
    <location>
        <position position="452"/>
    </location>
</feature>
<feature type="disulfide bond" evidence="2">
    <location>
        <begin position="120"/>
        <end position="172"/>
    </location>
</feature>
<feature type="disulfide bond" evidence="2">
    <location>
        <begin position="430"/>
        <end position="535"/>
    </location>
</feature>
<feature type="sequence conflict" description="In Ref. 2; AAF04563." evidence="5" ref="2">
    <original>G</original>
    <variation>R</variation>
    <location>
        <position position="15"/>
    </location>
</feature>
<feature type="sequence conflict" description="In Ref. 2; AAF04563." evidence="5" ref="2">
    <original>H</original>
    <variation>Q</variation>
    <location>
        <position position="227"/>
    </location>
</feature>
<feature type="sequence conflict" description="In Ref. 2; AAF04563." evidence="5" ref="2">
    <original>D</original>
    <variation>N</variation>
    <location>
        <position position="350"/>
    </location>
</feature>
<evidence type="ECO:0000250" key="1"/>
<evidence type="ECO:0000250" key="2">
    <source>
        <dbReference type="UniProtKB" id="Q9Y251"/>
    </source>
</evidence>
<evidence type="ECO:0000269" key="3">
    <source>
    </source>
</evidence>
<evidence type="ECO:0000269" key="4">
    <source>
    </source>
</evidence>
<evidence type="ECO:0000305" key="5"/>
<keyword id="KW-0106">Calcium</keyword>
<keyword id="KW-0130">Cell adhesion</keyword>
<keyword id="KW-1015">Disulfide bond</keyword>
<keyword id="KW-0325">Glycoprotein</keyword>
<keyword id="KW-0378">Hydrolase</keyword>
<keyword id="KW-0458">Lysosome</keyword>
<keyword id="KW-0460">Magnesium</keyword>
<keyword id="KW-0472">Membrane</keyword>
<keyword id="KW-0539">Nucleus</keyword>
<keyword id="KW-1185">Reference proteome</keyword>
<keyword id="KW-0964">Secreted</keyword>
<keyword id="KW-0732">Signal</keyword>
<organism>
    <name type="scientific">Rattus norvegicus</name>
    <name type="common">Rat</name>
    <dbReference type="NCBI Taxonomy" id="10116"/>
    <lineage>
        <taxon>Eukaryota</taxon>
        <taxon>Metazoa</taxon>
        <taxon>Chordata</taxon>
        <taxon>Craniata</taxon>
        <taxon>Vertebrata</taxon>
        <taxon>Euteleostomi</taxon>
        <taxon>Mammalia</taxon>
        <taxon>Eutheria</taxon>
        <taxon>Euarchontoglires</taxon>
        <taxon>Glires</taxon>
        <taxon>Rodentia</taxon>
        <taxon>Myomorpha</taxon>
        <taxon>Muroidea</taxon>
        <taxon>Muridae</taxon>
        <taxon>Murinae</taxon>
        <taxon>Rattus</taxon>
    </lineage>
</organism>
<reference key="1">
    <citation type="journal article" date="1999" name="Nat. Med.">
        <title>Cloning of mammalian heparanase, an important enzyme in tumor invasion and metastasis.</title>
        <authorList>
            <person name="Hulett M.D."/>
            <person name="Freeman C."/>
            <person name="Hamdorf B.J."/>
            <person name="Baker R.T."/>
            <person name="Harris M.J."/>
            <person name="Parish C.R."/>
        </authorList>
    </citation>
    <scope>NUCLEOTIDE SEQUENCE [MRNA]</scope>
    <source>
        <tissue>Placenta</tissue>
    </source>
</reference>
<reference key="2">
    <citation type="journal article" date="2002" name="J. Biol. Chem.">
        <title>Characterization of heparanase from a rat parathyroid cell line.</title>
        <authorList>
            <person name="Podyma-Inoue K.A."/>
            <person name="Yokote H."/>
            <person name="Sakaguchi K."/>
            <person name="Ikuta M."/>
            <person name="Yanagishita M."/>
        </authorList>
    </citation>
    <scope>NUCLEOTIDE SEQUENCE [MRNA]</scope>
    <scope>ACTIVITY REGULATION</scope>
</reference>
<reference key="3">
    <citation type="journal article" date="2005" name="FASEB J.">
        <title>Heparanase accelerates wound angiogenesis and wound healing in mouse and rat models.</title>
        <authorList>
            <person name="Zcharia E."/>
            <person name="Zilka R."/>
            <person name="Yaar A."/>
            <person name="Yacoby-Zeevi O."/>
            <person name="Zetser A."/>
            <person name="Metzger S."/>
            <person name="Sarid R."/>
            <person name="Naggi A."/>
            <person name="Casu B."/>
            <person name="Ilan N."/>
            <person name="Vlodavsky I."/>
            <person name="Abramovitch R."/>
        </authorList>
    </citation>
    <scope>FUNCTION</scope>
</reference>
<accession>Q71RP1</accession>
<accession>Q9QZF8</accession>
<comment type="function">
    <text evidence="1 4">Endoglycosidase that cleaves heparan sulfate proteoglycans (HSPGs) into heparan sulfate side chains and core proteoglycans. Participates in extracellular matrix (ECM) degradation and remodeling. Selectively cleaves the linkage between a glucuronic acid unit and an N-sulfo glucosamine unit carrying either a 3-O-sulfo or a 6-O-sulfo group. Can also cleave the linkage between a glucuronic acid unit and an N-sulfo glucosamine unit carrying a 2-O-sulfo group, but not linkages between a glucuronic acid unit and a 2-O-sulfated iduronic acid moiety. It is essentially inactive at neutral pH but becomes active under acidic conditions such as during tumor invasion and in inflammatory processes. Facilitates cell migration associated with metastasis, wound healing and inflammation. Enhances shedding of syndecans, and increases endothelial invasion and angiogenesis in myelomas. Acts as a procoagulant by increasing the generation of activation factor X in the presence of tissue factor and activation factor VII. Increases cell adhesion to the extracellular matrix (ECM), independent of its enzymatic activity. Induces AKT1/PKB phosphorylation via lipid rafts increasing cell mobility and invasion. Heparin increases this AKT1/PKB activation. Regulates osteogenesis. Enhances angiogenesis through up-regulation of SRC-mediated activation of VEGF. Implicated in hair follicle inner root sheath differentiation and hair homeostasis (By similarity).</text>
</comment>
<comment type="catalytic activity">
    <reaction>
        <text>endohydrolysis of (1-&gt;4)-beta-D-glycosidic bonds of heparan sulfate chains in heparan sulfate proteoglycan.</text>
        <dbReference type="EC" id="3.2.1.166"/>
    </reaction>
</comment>
<comment type="activity regulation">
    <text evidence="1 3">Inhibited by laminarin sulfate and, to a lower extent, by heparin and sulfamin (By similarity). Activated by calcium and magnesium. Inhibited by EDTA.</text>
</comment>
<comment type="subunit">
    <text evidence="1">Heterodimer; heterodimer formation between the 8 kDa and the 50 kDa subunits is required for enzyme activity (By similarity). Interacts with TF; the interaction, inhibited by heparin, enhances the generation of activated factor X and activates coagulation. Interacts with HRG; the interaction is enhanced at acidic pH, partially inhibits binding of HPSE to cell surface receptors and modulates its enzymatic activity. Interacts with SDC1; the interaction enhances the shedding of SDC1. Interacts with HPSE2 (By similarity).</text>
</comment>
<comment type="subcellular location">
    <subcellularLocation>
        <location evidence="1">Lysosome membrane</location>
        <topology evidence="1">Peripheral membrane protein</topology>
    </subcellularLocation>
    <subcellularLocation>
        <location evidence="1">Secreted</location>
    </subcellularLocation>
    <subcellularLocation>
        <location evidence="1">Nucleus</location>
    </subcellularLocation>
    <text evidence="1">Proheparanase is secreted via vesicles of the Golgi. Interacts with cell membrane heparan sulfate proteoglycans (HSPGs). Endocytosed and accumulates in endosomes. Transferred to lysosomes where it is proteolytically cleaved to produce the active enzyme. Under certain stimuli, transferred to the cell surface. Colocalizes with SDC1 in endosomal/lysosomal vesicles. Accumulates in perinuclear lysosomal vesicles. Heparin retains proheparanase in the extracellular medium. Associates with lipid rafts (By similarity).</text>
</comment>
<comment type="PTM">
    <text evidence="1">Proteolytically processed. The cleavage of the 65 kDa form leads to the generation of a linker peptide, and the 8 kDa and 50 kDa products. The active form, the 8/50 kDa heterodimer, is resistant to degradation. Complete removal of the linker peptide appears to be a prerequisite to the complete activation of the enzyme (By similarity).</text>
</comment>
<comment type="PTM">
    <text evidence="1">N-glycosylated. Glycosylation of the 50 kDa subunit appears to be essential for its solubility (By similarity).</text>
</comment>
<comment type="similarity">
    <text evidence="5">Belongs to the glycosyl hydrolase 79 family.</text>
</comment>
<gene>
    <name type="primary">Hpse</name>
    <name type="synonym">Hep</name>
</gene>